<gene>
    <name evidence="1" type="primary">ispF</name>
    <name type="ordered locus">ECH74115_3997</name>
</gene>
<reference key="1">
    <citation type="journal article" date="2011" name="Proc. Natl. Acad. Sci. U.S.A.">
        <title>Genomic anatomy of Escherichia coli O157:H7 outbreaks.</title>
        <authorList>
            <person name="Eppinger M."/>
            <person name="Mammel M.K."/>
            <person name="Leclerc J.E."/>
            <person name="Ravel J."/>
            <person name="Cebula T.A."/>
        </authorList>
    </citation>
    <scope>NUCLEOTIDE SEQUENCE [LARGE SCALE GENOMIC DNA]</scope>
    <source>
        <strain>EC4115 / EHEC</strain>
    </source>
</reference>
<organism>
    <name type="scientific">Escherichia coli O157:H7 (strain EC4115 / EHEC)</name>
    <dbReference type="NCBI Taxonomy" id="444450"/>
    <lineage>
        <taxon>Bacteria</taxon>
        <taxon>Pseudomonadati</taxon>
        <taxon>Pseudomonadota</taxon>
        <taxon>Gammaproteobacteria</taxon>
        <taxon>Enterobacterales</taxon>
        <taxon>Enterobacteriaceae</taxon>
        <taxon>Escherichia</taxon>
    </lineage>
</organism>
<dbReference type="EC" id="4.6.1.12" evidence="1"/>
<dbReference type="EMBL" id="CP001164">
    <property type="protein sequence ID" value="ACI36988.1"/>
    <property type="molecule type" value="Genomic_DNA"/>
</dbReference>
<dbReference type="RefSeq" id="WP_001219242.1">
    <property type="nucleotide sequence ID" value="NC_011353.1"/>
</dbReference>
<dbReference type="SMR" id="B5Z3A8"/>
<dbReference type="GeneID" id="93779260"/>
<dbReference type="KEGG" id="ecf:ECH74115_3997"/>
<dbReference type="HOGENOM" id="CLU_084630_2_0_6"/>
<dbReference type="UniPathway" id="UPA00056">
    <property type="reaction ID" value="UER00095"/>
</dbReference>
<dbReference type="GO" id="GO:0008685">
    <property type="term" value="F:2-C-methyl-D-erythritol 2,4-cyclodiphosphate synthase activity"/>
    <property type="evidence" value="ECO:0007669"/>
    <property type="project" value="UniProtKB-UniRule"/>
</dbReference>
<dbReference type="GO" id="GO:0046872">
    <property type="term" value="F:metal ion binding"/>
    <property type="evidence" value="ECO:0007669"/>
    <property type="project" value="UniProtKB-KW"/>
</dbReference>
<dbReference type="GO" id="GO:0019288">
    <property type="term" value="P:isopentenyl diphosphate biosynthetic process, methylerythritol 4-phosphate pathway"/>
    <property type="evidence" value="ECO:0007669"/>
    <property type="project" value="UniProtKB-UniRule"/>
</dbReference>
<dbReference type="GO" id="GO:0016114">
    <property type="term" value="P:terpenoid biosynthetic process"/>
    <property type="evidence" value="ECO:0007669"/>
    <property type="project" value="InterPro"/>
</dbReference>
<dbReference type="CDD" id="cd00554">
    <property type="entry name" value="MECDP_synthase"/>
    <property type="match status" value="1"/>
</dbReference>
<dbReference type="FunFam" id="3.30.1330.50:FF:000001">
    <property type="entry name" value="2-C-methyl-D-erythritol 2,4-cyclodiphosphate synthase"/>
    <property type="match status" value="1"/>
</dbReference>
<dbReference type="Gene3D" id="3.30.1330.50">
    <property type="entry name" value="2-C-methyl-D-erythritol 2,4-cyclodiphosphate synthase"/>
    <property type="match status" value="1"/>
</dbReference>
<dbReference type="HAMAP" id="MF_00107">
    <property type="entry name" value="IspF"/>
    <property type="match status" value="1"/>
</dbReference>
<dbReference type="InterPro" id="IPR003526">
    <property type="entry name" value="MECDP_synthase"/>
</dbReference>
<dbReference type="InterPro" id="IPR020555">
    <property type="entry name" value="MECDP_synthase_CS"/>
</dbReference>
<dbReference type="InterPro" id="IPR036571">
    <property type="entry name" value="MECDP_synthase_sf"/>
</dbReference>
<dbReference type="NCBIfam" id="TIGR00151">
    <property type="entry name" value="ispF"/>
    <property type="match status" value="1"/>
</dbReference>
<dbReference type="PANTHER" id="PTHR43181">
    <property type="entry name" value="2-C-METHYL-D-ERYTHRITOL 2,4-CYCLODIPHOSPHATE SYNTHASE, CHLOROPLASTIC"/>
    <property type="match status" value="1"/>
</dbReference>
<dbReference type="PANTHER" id="PTHR43181:SF1">
    <property type="entry name" value="2-C-METHYL-D-ERYTHRITOL 2,4-CYCLODIPHOSPHATE SYNTHASE, CHLOROPLASTIC"/>
    <property type="match status" value="1"/>
</dbReference>
<dbReference type="Pfam" id="PF02542">
    <property type="entry name" value="YgbB"/>
    <property type="match status" value="1"/>
</dbReference>
<dbReference type="SUPFAM" id="SSF69765">
    <property type="entry name" value="IpsF-like"/>
    <property type="match status" value="1"/>
</dbReference>
<dbReference type="PROSITE" id="PS01350">
    <property type="entry name" value="ISPF"/>
    <property type="match status" value="1"/>
</dbReference>
<keyword id="KW-0414">Isoprene biosynthesis</keyword>
<keyword id="KW-0456">Lyase</keyword>
<keyword id="KW-0479">Metal-binding</keyword>
<sequence length="159" mass="16898">MRIGHGFDVHAFGGEGPIIIGGVRIPYEKGLLAHSDGDVALHALTDALLGAAALGDIGKLFPDTDPAFKGADSRELLREAWRRIQAKGYTLGNVDVTIIAQAPKMLPHIPQMRVFIAEDLGCHMDDVNVKATTTEKLGFTGRGEGIACEAVALLIKATK</sequence>
<proteinExistence type="inferred from homology"/>
<accession>B5Z3A8</accession>
<name>ISPF_ECO5E</name>
<comment type="function">
    <text evidence="1">Involved in the biosynthesis of isopentenyl diphosphate (IPP) and dimethylallyl diphosphate (DMAPP), two major building blocks of isoprenoid compounds. Catalyzes the conversion of 4-diphosphocytidyl-2-C-methyl-D-erythritol 2-phosphate (CDP-ME2P) to 2-C-methyl-D-erythritol 2,4-cyclodiphosphate (ME-CPP) with a corresponding release of cytidine 5-monophosphate (CMP).</text>
</comment>
<comment type="catalytic activity">
    <reaction evidence="1">
        <text>4-CDP-2-C-methyl-D-erythritol 2-phosphate = 2-C-methyl-D-erythritol 2,4-cyclic diphosphate + CMP</text>
        <dbReference type="Rhea" id="RHEA:23864"/>
        <dbReference type="ChEBI" id="CHEBI:57919"/>
        <dbReference type="ChEBI" id="CHEBI:58483"/>
        <dbReference type="ChEBI" id="CHEBI:60377"/>
        <dbReference type="EC" id="4.6.1.12"/>
    </reaction>
</comment>
<comment type="cofactor">
    <cofactor evidence="1">
        <name>a divalent metal cation</name>
        <dbReference type="ChEBI" id="CHEBI:60240"/>
    </cofactor>
    <text evidence="1">Binds 1 divalent metal cation per subunit.</text>
</comment>
<comment type="pathway">
    <text evidence="1">Isoprenoid biosynthesis; isopentenyl diphosphate biosynthesis via DXP pathway; isopentenyl diphosphate from 1-deoxy-D-xylulose 5-phosphate: step 4/6.</text>
</comment>
<comment type="subunit">
    <text evidence="1">Homotrimer.</text>
</comment>
<comment type="similarity">
    <text evidence="1">Belongs to the IspF family.</text>
</comment>
<feature type="chain" id="PRO_1000094259" description="2-C-methyl-D-erythritol 2,4-cyclodiphosphate synthase">
    <location>
        <begin position="1"/>
        <end position="159"/>
    </location>
</feature>
<feature type="binding site" evidence="1">
    <location>
        <begin position="8"/>
        <end position="10"/>
    </location>
    <ligand>
        <name>4-CDP-2-C-methyl-D-erythritol 2-phosphate</name>
        <dbReference type="ChEBI" id="CHEBI:57919"/>
    </ligand>
</feature>
<feature type="binding site" evidence="1">
    <location>
        <position position="8"/>
    </location>
    <ligand>
        <name>a divalent metal cation</name>
        <dbReference type="ChEBI" id="CHEBI:60240"/>
    </ligand>
</feature>
<feature type="binding site" evidence="1">
    <location>
        <position position="10"/>
    </location>
    <ligand>
        <name>a divalent metal cation</name>
        <dbReference type="ChEBI" id="CHEBI:60240"/>
    </ligand>
</feature>
<feature type="binding site" evidence="1">
    <location>
        <begin position="34"/>
        <end position="35"/>
    </location>
    <ligand>
        <name>4-CDP-2-C-methyl-D-erythritol 2-phosphate</name>
        <dbReference type="ChEBI" id="CHEBI:57919"/>
    </ligand>
</feature>
<feature type="binding site" evidence="1">
    <location>
        <position position="42"/>
    </location>
    <ligand>
        <name>a divalent metal cation</name>
        <dbReference type="ChEBI" id="CHEBI:60240"/>
    </ligand>
</feature>
<feature type="binding site" evidence="1">
    <location>
        <begin position="56"/>
        <end position="58"/>
    </location>
    <ligand>
        <name>4-CDP-2-C-methyl-D-erythritol 2-phosphate</name>
        <dbReference type="ChEBI" id="CHEBI:57919"/>
    </ligand>
</feature>
<feature type="binding site" evidence="1">
    <location>
        <begin position="61"/>
        <end position="65"/>
    </location>
    <ligand>
        <name>4-CDP-2-C-methyl-D-erythritol 2-phosphate</name>
        <dbReference type="ChEBI" id="CHEBI:57919"/>
    </ligand>
</feature>
<feature type="binding site" evidence="1">
    <location>
        <begin position="100"/>
        <end position="106"/>
    </location>
    <ligand>
        <name>4-CDP-2-C-methyl-D-erythritol 2-phosphate</name>
        <dbReference type="ChEBI" id="CHEBI:57919"/>
    </ligand>
</feature>
<feature type="binding site" evidence="1">
    <location>
        <begin position="132"/>
        <end position="135"/>
    </location>
    <ligand>
        <name>4-CDP-2-C-methyl-D-erythritol 2-phosphate</name>
        <dbReference type="ChEBI" id="CHEBI:57919"/>
    </ligand>
</feature>
<feature type="binding site" evidence="1">
    <location>
        <position position="139"/>
    </location>
    <ligand>
        <name>4-CDP-2-C-methyl-D-erythritol 2-phosphate</name>
        <dbReference type="ChEBI" id="CHEBI:57919"/>
    </ligand>
</feature>
<feature type="binding site" evidence="1">
    <location>
        <position position="142"/>
    </location>
    <ligand>
        <name>4-CDP-2-C-methyl-D-erythritol 2-phosphate</name>
        <dbReference type="ChEBI" id="CHEBI:57919"/>
    </ligand>
</feature>
<feature type="site" description="Transition state stabilizer" evidence="1">
    <location>
        <position position="34"/>
    </location>
</feature>
<feature type="site" description="Transition state stabilizer" evidence="1">
    <location>
        <position position="133"/>
    </location>
</feature>
<protein>
    <recommendedName>
        <fullName evidence="1">2-C-methyl-D-erythritol 2,4-cyclodiphosphate synthase</fullName>
        <shortName evidence="1">MECDP-synthase</shortName>
        <shortName evidence="1">MECPP-synthase</shortName>
        <shortName evidence="1">MECPS</shortName>
        <ecNumber evidence="1">4.6.1.12</ecNumber>
    </recommendedName>
</protein>
<evidence type="ECO:0000255" key="1">
    <source>
        <dbReference type="HAMAP-Rule" id="MF_00107"/>
    </source>
</evidence>